<protein>
    <recommendedName>
        <fullName evidence="4">Natriuretic peptide NP2</fullName>
    </recommendedName>
    <alternativeName>
        <fullName evidence="2">NP2_Casca</fullName>
    </alternativeName>
</protein>
<comment type="function">
    <text evidence="1">Snake venom natriuretic peptide that shows an increase in perfusion pressure, urinary flow and glomerular filtration rate. Reduces total and proximal tubular transport of sodium. In the aortic ring assay, causes a relaxant effect in endothelium-intact thoracic aortic rings precontracted with phenylephrine in the presence and absence of isatin, a natriuretic receptor antagonist.</text>
</comment>
<comment type="subcellular location">
    <subcellularLocation>
        <location evidence="1">Secreted</location>
    </subcellularLocation>
</comment>
<comment type="tissue specificity">
    <text evidence="4">Expressed by the venom gland.</text>
</comment>
<comment type="mass spectrometry" mass="3453.94" method="MALDI" evidence="1"/>
<comment type="similarity">
    <text evidence="3">Belongs to the natriuretic peptide family.</text>
</comment>
<evidence type="ECO:0000269" key="1">
    <source>
    </source>
</evidence>
<evidence type="ECO:0000303" key="2">
    <source>
    </source>
</evidence>
<evidence type="ECO:0000305" key="3"/>
<evidence type="ECO:0000305" key="4">
    <source>
    </source>
</evidence>
<dbReference type="GO" id="GO:0005576">
    <property type="term" value="C:extracellular region"/>
    <property type="evidence" value="ECO:0007669"/>
    <property type="project" value="UniProtKB-SubCell"/>
</dbReference>
<dbReference type="GO" id="GO:0005179">
    <property type="term" value="F:hormone activity"/>
    <property type="evidence" value="ECO:0007669"/>
    <property type="project" value="InterPro"/>
</dbReference>
<dbReference type="GO" id="GO:0090729">
    <property type="term" value="F:toxin activity"/>
    <property type="evidence" value="ECO:0007669"/>
    <property type="project" value="UniProtKB-KW"/>
</dbReference>
<dbReference type="GO" id="GO:0008217">
    <property type="term" value="P:regulation of blood pressure"/>
    <property type="evidence" value="ECO:0007669"/>
    <property type="project" value="UniProtKB-KW"/>
</dbReference>
<dbReference type="GO" id="GO:0042311">
    <property type="term" value="P:vasodilation"/>
    <property type="evidence" value="ECO:0007669"/>
    <property type="project" value="UniProtKB-KW"/>
</dbReference>
<dbReference type="InterPro" id="IPR000663">
    <property type="entry name" value="Natr_peptide"/>
</dbReference>
<dbReference type="InterPro" id="IPR030480">
    <property type="entry name" value="Natr_peptide_CS"/>
</dbReference>
<dbReference type="Pfam" id="PF00212">
    <property type="entry name" value="ANP"/>
    <property type="match status" value="1"/>
</dbReference>
<dbReference type="PRINTS" id="PR00710">
    <property type="entry name" value="NATPEPTIDES"/>
</dbReference>
<dbReference type="SMART" id="SM00183">
    <property type="entry name" value="NAT_PEP"/>
    <property type="match status" value="1"/>
</dbReference>
<dbReference type="PROSITE" id="PS00263">
    <property type="entry name" value="NATRIURETIC_PEPTIDE"/>
    <property type="match status" value="1"/>
</dbReference>
<accession>P0DKY6</accession>
<keyword id="KW-0903">Direct protein sequencing</keyword>
<keyword id="KW-1015">Disulfide bond</keyword>
<keyword id="KW-0382">Hypotensive agent</keyword>
<keyword id="KW-0964">Secreted</keyword>
<keyword id="KW-0800">Toxin</keyword>
<keyword id="KW-0838">Vasoactive</keyword>
<keyword id="KW-0840">Vasodilator</keyword>
<proteinExistence type="evidence at protein level"/>
<name>ANF_CRODC</name>
<sequence length="33" mass="3454">VSTSRGSQGCFGLKLDRIGAASGLGCWRRIVDS</sequence>
<feature type="chain" id="PRO_0000421799" description="Natriuretic peptide NP2" evidence="1">
    <location>
        <begin position="1"/>
        <end position="33"/>
    </location>
</feature>
<feature type="disulfide bond" evidence="3">
    <location>
        <begin position="10"/>
        <end position="26"/>
    </location>
</feature>
<reference key="1">
    <citation type="journal article" date="2008" name="Toxicon">
        <title>Renal and vascular effects of the natriuretic peptide isolated from Crotalus durissus cascavella venom.</title>
        <authorList>
            <person name="Evangelista J.S."/>
            <person name="Martins A.M."/>
            <person name="Nascimento N.R."/>
            <person name="Sousa C.M."/>
            <person name="Alves R.S."/>
            <person name="Toyama D.O."/>
            <person name="Toyama M.H."/>
            <person name="Evangelista J.J."/>
            <person name="Menezes D.B."/>
            <person name="Fonteles M.C."/>
            <person name="Moraes M.E."/>
            <person name="Monteiro H.S."/>
        </authorList>
    </citation>
    <scope>PROTEIN SEQUENCE</scope>
    <scope>FUNCTION</scope>
    <scope>MASS SPECTROMETRY</scope>
    <scope>SUBCELLULAR LOCATION</scope>
    <source>
        <tissue>Venom</tissue>
    </source>
</reference>
<organism>
    <name type="scientific">Crotalus durissus cascavella</name>
    <name type="common">Northeastern Brazilian rattlesnake</name>
    <dbReference type="NCBI Taxonomy" id="184540"/>
    <lineage>
        <taxon>Eukaryota</taxon>
        <taxon>Metazoa</taxon>
        <taxon>Chordata</taxon>
        <taxon>Craniata</taxon>
        <taxon>Vertebrata</taxon>
        <taxon>Euteleostomi</taxon>
        <taxon>Lepidosauria</taxon>
        <taxon>Squamata</taxon>
        <taxon>Bifurcata</taxon>
        <taxon>Unidentata</taxon>
        <taxon>Episquamata</taxon>
        <taxon>Toxicofera</taxon>
        <taxon>Serpentes</taxon>
        <taxon>Colubroidea</taxon>
        <taxon>Viperidae</taxon>
        <taxon>Crotalinae</taxon>
        <taxon>Crotalus</taxon>
    </lineage>
</organism>